<proteinExistence type="inferred from homology"/>
<sequence length="335" mass="37500">MSLPIKLGYKASAEQFNPRELVEYTVAAERHGFDSVVVSDHFQPWRYTGGHAPWALAWLGAVGERTSRVQIGTSVLTPTFRYNPAIIAQAFATFGMLYPGRVFLGVGTGEALNEQAVGLKEWPEFKERFARLRESVELMRKLWTEERVNYEGEYYRTVDATVYDKPSEPIPVYVSAGGAVVARYAGRAGDGFICTSGKGAELYTETLLPAVQEGADKVGRDAGGIDKLIEIKLSYDPDPWLALNNTRFWSPLSLSAEQKHSLSDPKQMEEAADALPMEQIAKRWIVASDPDEVVEKIKFYTDLGLNHLVFHAPGHDQLRFLEVFERDLAPRLRSL</sequence>
<feature type="chain" id="PRO_0000413603" description="F420-dependent glucose-6-phosphate dehydrogenase">
    <location>
        <begin position="1"/>
        <end position="335"/>
    </location>
</feature>
<feature type="active site" description="Proton donor" evidence="1">
    <location>
        <position position="41"/>
    </location>
</feature>
<feature type="active site" description="Proton acceptor" evidence="1">
    <location>
        <position position="110"/>
    </location>
</feature>
<feature type="binding site" evidence="1">
    <location>
        <position position="40"/>
    </location>
    <ligand>
        <name>coenzyme F420-(gamma-Glu)n</name>
        <dbReference type="ChEBI" id="CHEBI:133980"/>
    </ligand>
</feature>
<feature type="binding site" evidence="1">
    <location>
        <position position="77"/>
    </location>
    <ligand>
        <name>coenzyme F420-(gamma-Glu)n</name>
        <dbReference type="ChEBI" id="CHEBI:133980"/>
    </ligand>
</feature>
<feature type="binding site" evidence="1">
    <location>
        <begin position="108"/>
        <end position="109"/>
    </location>
    <ligand>
        <name>coenzyme F420-(gamma-Glu)n</name>
        <dbReference type="ChEBI" id="CHEBI:133980"/>
    </ligand>
</feature>
<feature type="binding site" evidence="1">
    <location>
        <position position="113"/>
    </location>
    <ligand>
        <name>coenzyme F420-(gamma-Glu)n</name>
        <dbReference type="ChEBI" id="CHEBI:133980"/>
    </ligand>
</feature>
<feature type="binding site" evidence="1">
    <location>
        <begin position="177"/>
        <end position="178"/>
    </location>
    <ligand>
        <name>coenzyme F420-(gamma-Glu)n</name>
        <dbReference type="ChEBI" id="CHEBI:133980"/>
    </ligand>
</feature>
<feature type="binding site" evidence="1">
    <location>
        <begin position="180"/>
        <end position="181"/>
    </location>
    <ligand>
        <name>coenzyme F420-(gamma-Glu)n</name>
        <dbReference type="ChEBI" id="CHEBI:133980"/>
    </ligand>
</feature>
<feature type="binding site" evidence="1">
    <location>
        <position position="195"/>
    </location>
    <ligand>
        <name>substrate</name>
    </ligand>
</feature>
<feature type="binding site" evidence="1">
    <location>
        <position position="198"/>
    </location>
    <ligand>
        <name>substrate</name>
    </ligand>
</feature>
<feature type="binding site" evidence="1">
    <location>
        <position position="259"/>
    </location>
    <ligand>
        <name>substrate</name>
    </ligand>
</feature>
<feature type="binding site" evidence="1">
    <location>
        <position position="283"/>
    </location>
    <ligand>
        <name>substrate</name>
    </ligand>
</feature>
<comment type="function">
    <text evidence="1">Catalyzes the coenzyme F420-dependent oxidation of glucose 6-phosphate (G6P) to 6-phosphogluconolactone.</text>
</comment>
<comment type="catalytic activity">
    <reaction evidence="1">
        <text>oxidized coenzyme F420-(gamma-L-Glu)(n) + D-glucose 6-phosphate + H(+) = 6-phospho-D-glucono-1,5-lactone + reduced coenzyme F420-(gamma-L-Glu)(n)</text>
        <dbReference type="Rhea" id="RHEA:27294"/>
        <dbReference type="Rhea" id="RHEA-COMP:12939"/>
        <dbReference type="Rhea" id="RHEA-COMP:14378"/>
        <dbReference type="ChEBI" id="CHEBI:15378"/>
        <dbReference type="ChEBI" id="CHEBI:57955"/>
        <dbReference type="ChEBI" id="CHEBI:61548"/>
        <dbReference type="ChEBI" id="CHEBI:133980"/>
        <dbReference type="ChEBI" id="CHEBI:139511"/>
        <dbReference type="EC" id="1.1.98.2"/>
    </reaction>
</comment>
<comment type="subunit">
    <text evidence="1">Homodimer.</text>
</comment>
<comment type="similarity">
    <text evidence="1">Belongs to the F420-dependent glucose-6-phosphate dehydrogenase family.</text>
</comment>
<protein>
    <recommendedName>
        <fullName evidence="1">F420-dependent glucose-6-phosphate dehydrogenase</fullName>
        <shortName evidence="1">FGD</shortName>
        <shortName evidence="1">G6PD</shortName>
        <ecNumber evidence="1">1.1.98.2</ecNumber>
    </recommendedName>
</protein>
<name>FGD_SEGRD</name>
<accession>D6ZA79</accession>
<dbReference type="EC" id="1.1.98.2" evidence="1"/>
<dbReference type="EMBL" id="CP001958">
    <property type="protein sequence ID" value="ADG96621.1"/>
    <property type="molecule type" value="Genomic_DNA"/>
</dbReference>
<dbReference type="RefSeq" id="WP_013137077.1">
    <property type="nucleotide sequence ID" value="NC_014168.1"/>
</dbReference>
<dbReference type="SMR" id="D6ZA79"/>
<dbReference type="STRING" id="640132.Srot_0132"/>
<dbReference type="KEGG" id="srt:Srot_0132"/>
<dbReference type="eggNOG" id="COG2141">
    <property type="taxonomic scope" value="Bacteria"/>
</dbReference>
<dbReference type="HOGENOM" id="CLU_027853_4_0_11"/>
<dbReference type="OrthoDB" id="180193at2"/>
<dbReference type="Proteomes" id="UP000002247">
    <property type="component" value="Chromosome"/>
</dbReference>
<dbReference type="GO" id="GO:0070967">
    <property type="term" value="F:coenzyme F420 binding"/>
    <property type="evidence" value="ECO:0007669"/>
    <property type="project" value="UniProtKB-UniRule"/>
</dbReference>
<dbReference type="GO" id="GO:0052749">
    <property type="term" value="F:glucose-6-phosphate dehydrogenase (coenzyme F420) activity"/>
    <property type="evidence" value="ECO:0007669"/>
    <property type="project" value="UniProtKB-EC"/>
</dbReference>
<dbReference type="GO" id="GO:0016705">
    <property type="term" value="F:oxidoreductase activity, acting on paired donors, with incorporation or reduction of molecular oxygen"/>
    <property type="evidence" value="ECO:0007669"/>
    <property type="project" value="InterPro"/>
</dbReference>
<dbReference type="GO" id="GO:0005975">
    <property type="term" value="P:carbohydrate metabolic process"/>
    <property type="evidence" value="ECO:0007669"/>
    <property type="project" value="UniProtKB-UniRule"/>
</dbReference>
<dbReference type="CDD" id="cd01097">
    <property type="entry name" value="Tetrahydromethanopterin_reductase"/>
    <property type="match status" value="1"/>
</dbReference>
<dbReference type="Gene3D" id="3.20.20.30">
    <property type="entry name" value="Luciferase-like domain"/>
    <property type="match status" value="1"/>
</dbReference>
<dbReference type="HAMAP" id="MF_02123">
    <property type="entry name" value="F420_G6P_DH"/>
    <property type="match status" value="1"/>
</dbReference>
<dbReference type="InterPro" id="IPR019944">
    <property type="entry name" value="F420-dep_G6P_DH"/>
</dbReference>
<dbReference type="InterPro" id="IPR050564">
    <property type="entry name" value="F420-G6PD/mer"/>
</dbReference>
<dbReference type="InterPro" id="IPR019945">
    <property type="entry name" value="F420_G6P_DH-rel"/>
</dbReference>
<dbReference type="InterPro" id="IPR011251">
    <property type="entry name" value="Luciferase-like_dom"/>
</dbReference>
<dbReference type="InterPro" id="IPR036661">
    <property type="entry name" value="Luciferase-like_sf"/>
</dbReference>
<dbReference type="NCBIfam" id="TIGR03554">
    <property type="entry name" value="F420_G6P_DH"/>
    <property type="match status" value="1"/>
</dbReference>
<dbReference type="NCBIfam" id="TIGR03557">
    <property type="entry name" value="F420_G6P_family"/>
    <property type="match status" value="1"/>
</dbReference>
<dbReference type="PANTHER" id="PTHR43244">
    <property type="match status" value="1"/>
</dbReference>
<dbReference type="PANTHER" id="PTHR43244:SF1">
    <property type="entry name" value="5,10-METHYLENETETRAHYDROMETHANOPTERIN REDUCTASE"/>
    <property type="match status" value="1"/>
</dbReference>
<dbReference type="Pfam" id="PF00296">
    <property type="entry name" value="Bac_luciferase"/>
    <property type="match status" value="1"/>
</dbReference>
<dbReference type="SUPFAM" id="SSF51679">
    <property type="entry name" value="Bacterial luciferase-like"/>
    <property type="match status" value="1"/>
</dbReference>
<evidence type="ECO:0000255" key="1">
    <source>
        <dbReference type="HAMAP-Rule" id="MF_02123"/>
    </source>
</evidence>
<gene>
    <name evidence="1" type="primary">fgd</name>
    <name type="ordered locus">Srot_0132</name>
</gene>
<organism>
    <name type="scientific">Segniliparus rotundus (strain ATCC BAA-972 / CDC 1076 / CIP 108378 / DSM 44985 / JCM 13578)</name>
    <dbReference type="NCBI Taxonomy" id="640132"/>
    <lineage>
        <taxon>Bacteria</taxon>
        <taxon>Bacillati</taxon>
        <taxon>Actinomycetota</taxon>
        <taxon>Actinomycetes</taxon>
        <taxon>Mycobacteriales</taxon>
        <taxon>Segniliparaceae</taxon>
        <taxon>Segniliparus</taxon>
    </lineage>
</organism>
<keyword id="KW-0119">Carbohydrate metabolism</keyword>
<keyword id="KW-0560">Oxidoreductase</keyword>
<keyword id="KW-1185">Reference proteome</keyword>
<reference key="1">
    <citation type="journal article" date="2010" name="Stand. Genomic Sci.">
        <title>Complete genome sequence of Segniliparus rotundus type strain (CDC 1076).</title>
        <authorList>
            <person name="Sikorski J."/>
            <person name="Lapidus A."/>
            <person name="Copeland A."/>
            <person name="Misra M."/>
            <person name="Glavina Del Rio T."/>
            <person name="Nolan M."/>
            <person name="Lucas S."/>
            <person name="Chen F."/>
            <person name="Tice H."/>
            <person name="Cheng J.F."/>
            <person name="Jando M."/>
            <person name="Schneider S."/>
            <person name="Bruce D."/>
            <person name="Goodwin L."/>
            <person name="Pitluck S."/>
            <person name="Liolios K."/>
            <person name="Mikhailova N."/>
            <person name="Pati A."/>
            <person name="Ivanova N."/>
            <person name="Mavromatis K."/>
            <person name="Chen A."/>
            <person name="Palaniappan K."/>
            <person name="Chertkov O."/>
            <person name="Land M."/>
            <person name="Hauser L."/>
            <person name="Chang Y.J."/>
            <person name="Jeffries C.D."/>
            <person name="Brettin T."/>
            <person name="Detter J.C."/>
            <person name="Han C."/>
            <person name="Rohde M."/>
            <person name="Goker M."/>
            <person name="Bristow J."/>
            <person name="Eisen J.A."/>
            <person name="Markowitz V."/>
            <person name="Hugenholtz P."/>
            <person name="Kyrpides N.C."/>
            <person name="Klenk H.P."/>
        </authorList>
    </citation>
    <scope>NUCLEOTIDE SEQUENCE [LARGE SCALE GENOMIC DNA]</scope>
    <source>
        <strain>ATCC BAA-972 / CDC 1076 / CIP 108378 / DSM 44985 / JCM 13578</strain>
    </source>
</reference>